<organism>
    <name type="scientific">Geobacter metallireducens (strain ATCC 53774 / DSM 7210 / GS-15)</name>
    <dbReference type="NCBI Taxonomy" id="269799"/>
    <lineage>
        <taxon>Bacteria</taxon>
        <taxon>Pseudomonadati</taxon>
        <taxon>Thermodesulfobacteriota</taxon>
        <taxon>Desulfuromonadia</taxon>
        <taxon>Geobacterales</taxon>
        <taxon>Geobacteraceae</taxon>
        <taxon>Geobacter</taxon>
    </lineage>
</organism>
<sequence>MKEGIHPKYNEVTVKCACGNSFQTRSTRTEISTEICSACHPFFTGKQKLVDTAGRVERFRKKYGMQ</sequence>
<reference key="1">
    <citation type="journal article" date="2009" name="BMC Microbiol.">
        <title>The genome sequence of Geobacter metallireducens: features of metabolism, physiology and regulation common and dissimilar to Geobacter sulfurreducens.</title>
        <authorList>
            <person name="Aklujkar M."/>
            <person name="Krushkal J."/>
            <person name="DiBartolo G."/>
            <person name="Lapidus A."/>
            <person name="Land M.L."/>
            <person name="Lovley D.R."/>
        </authorList>
    </citation>
    <scope>NUCLEOTIDE SEQUENCE [LARGE SCALE GENOMIC DNA]</scope>
    <source>
        <strain>ATCC 53774 / DSM 7210 / GS-15</strain>
    </source>
</reference>
<feature type="chain" id="PRO_0000259189" description="Large ribosomal subunit protein bL31">
    <location>
        <begin position="1"/>
        <end position="66"/>
    </location>
</feature>
<feature type="binding site" evidence="1">
    <location>
        <position position="16"/>
    </location>
    <ligand>
        <name>Zn(2+)</name>
        <dbReference type="ChEBI" id="CHEBI:29105"/>
    </ligand>
</feature>
<feature type="binding site" evidence="1">
    <location>
        <position position="18"/>
    </location>
    <ligand>
        <name>Zn(2+)</name>
        <dbReference type="ChEBI" id="CHEBI:29105"/>
    </ligand>
</feature>
<feature type="binding site" evidence="1">
    <location>
        <position position="36"/>
    </location>
    <ligand>
        <name>Zn(2+)</name>
        <dbReference type="ChEBI" id="CHEBI:29105"/>
    </ligand>
</feature>
<feature type="binding site" evidence="1">
    <location>
        <position position="39"/>
    </location>
    <ligand>
        <name>Zn(2+)</name>
        <dbReference type="ChEBI" id="CHEBI:29105"/>
    </ligand>
</feature>
<keyword id="KW-0479">Metal-binding</keyword>
<keyword id="KW-1185">Reference proteome</keyword>
<keyword id="KW-0687">Ribonucleoprotein</keyword>
<keyword id="KW-0689">Ribosomal protein</keyword>
<keyword id="KW-0694">RNA-binding</keyword>
<keyword id="KW-0699">rRNA-binding</keyword>
<keyword id="KW-0862">Zinc</keyword>
<proteinExistence type="inferred from homology"/>
<accession>Q39YQ4</accession>
<evidence type="ECO:0000255" key="1">
    <source>
        <dbReference type="HAMAP-Rule" id="MF_00501"/>
    </source>
</evidence>
<evidence type="ECO:0000305" key="2"/>
<gene>
    <name evidence="1" type="primary">rpmE</name>
    <name type="ordered locus">Gmet_0377</name>
</gene>
<protein>
    <recommendedName>
        <fullName evidence="1">Large ribosomal subunit protein bL31</fullName>
    </recommendedName>
    <alternativeName>
        <fullName evidence="2">50S ribosomal protein L31</fullName>
    </alternativeName>
</protein>
<dbReference type="EMBL" id="CP000148">
    <property type="protein sequence ID" value="ABB30620.1"/>
    <property type="molecule type" value="Genomic_DNA"/>
</dbReference>
<dbReference type="RefSeq" id="WP_004512349.1">
    <property type="nucleotide sequence ID" value="NC_007517.1"/>
</dbReference>
<dbReference type="SMR" id="Q39YQ4"/>
<dbReference type="STRING" id="269799.Gmet_0377"/>
<dbReference type="KEGG" id="gme:Gmet_0377"/>
<dbReference type="eggNOG" id="COG0254">
    <property type="taxonomic scope" value="Bacteria"/>
</dbReference>
<dbReference type="HOGENOM" id="CLU_114306_4_3_7"/>
<dbReference type="Proteomes" id="UP000007073">
    <property type="component" value="Chromosome"/>
</dbReference>
<dbReference type="GO" id="GO:1990904">
    <property type="term" value="C:ribonucleoprotein complex"/>
    <property type="evidence" value="ECO:0007669"/>
    <property type="project" value="UniProtKB-KW"/>
</dbReference>
<dbReference type="GO" id="GO:0005840">
    <property type="term" value="C:ribosome"/>
    <property type="evidence" value="ECO:0007669"/>
    <property type="project" value="UniProtKB-KW"/>
</dbReference>
<dbReference type="GO" id="GO:0046872">
    <property type="term" value="F:metal ion binding"/>
    <property type="evidence" value="ECO:0007669"/>
    <property type="project" value="UniProtKB-KW"/>
</dbReference>
<dbReference type="GO" id="GO:0019843">
    <property type="term" value="F:rRNA binding"/>
    <property type="evidence" value="ECO:0007669"/>
    <property type="project" value="UniProtKB-KW"/>
</dbReference>
<dbReference type="GO" id="GO:0003735">
    <property type="term" value="F:structural constituent of ribosome"/>
    <property type="evidence" value="ECO:0007669"/>
    <property type="project" value="InterPro"/>
</dbReference>
<dbReference type="GO" id="GO:0006412">
    <property type="term" value="P:translation"/>
    <property type="evidence" value="ECO:0007669"/>
    <property type="project" value="UniProtKB-UniRule"/>
</dbReference>
<dbReference type="Gene3D" id="4.10.830.30">
    <property type="entry name" value="Ribosomal protein L31"/>
    <property type="match status" value="1"/>
</dbReference>
<dbReference type="HAMAP" id="MF_00501">
    <property type="entry name" value="Ribosomal_bL31_1"/>
    <property type="match status" value="1"/>
</dbReference>
<dbReference type="InterPro" id="IPR034704">
    <property type="entry name" value="Ribosomal_bL28/bL31-like_sf"/>
</dbReference>
<dbReference type="InterPro" id="IPR002150">
    <property type="entry name" value="Ribosomal_bL31"/>
</dbReference>
<dbReference type="InterPro" id="IPR027491">
    <property type="entry name" value="Ribosomal_bL31_A"/>
</dbReference>
<dbReference type="InterPro" id="IPR042105">
    <property type="entry name" value="Ribosomal_bL31_sf"/>
</dbReference>
<dbReference type="NCBIfam" id="TIGR00105">
    <property type="entry name" value="L31"/>
    <property type="match status" value="1"/>
</dbReference>
<dbReference type="NCBIfam" id="NF000612">
    <property type="entry name" value="PRK00019.1"/>
    <property type="match status" value="1"/>
</dbReference>
<dbReference type="NCBIfam" id="NF001809">
    <property type="entry name" value="PRK00528.1"/>
    <property type="match status" value="1"/>
</dbReference>
<dbReference type="PANTHER" id="PTHR33280">
    <property type="entry name" value="50S RIBOSOMAL PROTEIN L31, CHLOROPLASTIC"/>
    <property type="match status" value="1"/>
</dbReference>
<dbReference type="PANTHER" id="PTHR33280:SF6">
    <property type="entry name" value="LARGE RIBOSOMAL SUBUNIT PROTEIN BL31A"/>
    <property type="match status" value="1"/>
</dbReference>
<dbReference type="Pfam" id="PF01197">
    <property type="entry name" value="Ribosomal_L31"/>
    <property type="match status" value="1"/>
</dbReference>
<dbReference type="PRINTS" id="PR01249">
    <property type="entry name" value="RIBOSOMALL31"/>
</dbReference>
<dbReference type="SUPFAM" id="SSF143800">
    <property type="entry name" value="L28p-like"/>
    <property type="match status" value="1"/>
</dbReference>
<dbReference type="PROSITE" id="PS01143">
    <property type="entry name" value="RIBOSOMAL_L31"/>
    <property type="match status" value="1"/>
</dbReference>
<name>RL31_GEOMG</name>
<comment type="function">
    <text evidence="1">Binds the 23S rRNA.</text>
</comment>
<comment type="cofactor">
    <cofactor evidence="1">
        <name>Zn(2+)</name>
        <dbReference type="ChEBI" id="CHEBI:29105"/>
    </cofactor>
    <text evidence="1">Binds 1 zinc ion per subunit.</text>
</comment>
<comment type="subunit">
    <text evidence="1">Part of the 50S ribosomal subunit.</text>
</comment>
<comment type="similarity">
    <text evidence="1">Belongs to the bacterial ribosomal protein bL31 family. Type A subfamily.</text>
</comment>